<name>GSPH_KLEPN</name>
<evidence type="ECO:0000250" key="1">
    <source>
        <dbReference type="UniProtKB" id="Q00515"/>
    </source>
</evidence>
<evidence type="ECO:0000255" key="2"/>
<evidence type="ECO:0000255" key="3">
    <source>
        <dbReference type="PROSITE-ProRule" id="PRU01070"/>
    </source>
</evidence>
<evidence type="ECO:0000305" key="4"/>
<keyword id="KW-0997">Cell inner membrane</keyword>
<keyword id="KW-1003">Cell membrane</keyword>
<keyword id="KW-0472">Membrane</keyword>
<keyword id="KW-0488">Methylation</keyword>
<keyword id="KW-0653">Protein transport</keyword>
<keyword id="KW-0812">Transmembrane</keyword>
<keyword id="KW-1133">Transmembrane helix</keyword>
<keyword id="KW-0813">Transport</keyword>
<sequence>MRQRGFTLLEMMLILLLMGVSAGMVLLAFPASRDDSAAQTLARFEAQLRFVQQRGLQTGQFFGVSVHPDRWQFLVLEARDGADPAPADDGWSGYRWLPLRAGRVATSGSIAGGKLNLAFAQGEAWTPGDNPDVLIFPGGEMTPFRLTLGEAPGIAFNARGESLPEPQEAQ</sequence>
<feature type="propeptide" id="PRO_0000024222" description="Leader sequence" evidence="3">
    <location>
        <begin position="1"/>
        <end position="5"/>
    </location>
</feature>
<feature type="chain" id="PRO_0000024223" description="Type II secretion system protein H">
    <location>
        <begin position="6"/>
        <end position="170"/>
    </location>
</feature>
<feature type="transmembrane region" description="Helical" evidence="4">
    <location>
        <begin position="6"/>
        <end position="29"/>
    </location>
</feature>
<feature type="modified residue" description="N-methylphenylalanine" evidence="3">
    <location>
        <position position="6"/>
    </location>
</feature>
<comment type="function">
    <text evidence="1">Component of the type II secretion system required for the energy-dependent secretion of extracellular factors such as proteases and toxins from the periplasm. Part of the pseudopilus tip complex that is critical for the recognition and binding of secretion substrates.</text>
</comment>
<comment type="subunit">
    <text evidence="1">Type II secretion is composed of four main components: the outer membrane complex, the inner membrane complex, the cytoplasmic secretion ATPase and the periplasm-spanning pseudopilus. Interacts with core component PulG.</text>
</comment>
<comment type="subcellular location">
    <subcellularLocation>
        <location evidence="1">Cell inner membrane</location>
        <topology evidence="2">Single-pass membrane protein</topology>
    </subcellularLocation>
</comment>
<comment type="PTM">
    <text evidence="1">Cleaved by prepilin peptidase.</text>
</comment>
<comment type="PTM">
    <text evidence="1">Methylated by prepilin peptidase at the amino group of the N-terminal phenylalanine once the leader sequence is cleaved by prepilin peptidase.</text>
</comment>
<comment type="similarity">
    <text evidence="4">Belongs to the GSP H family.</text>
</comment>
<comment type="sequence caution" evidence="4">
    <conflict type="erroneous initiation">
        <sequence resource="EMBL-CDS" id="AAA25130"/>
    </conflict>
    <text>Truncated N-terminus.</text>
</comment>
<gene>
    <name type="primary">pulH</name>
</gene>
<accession>P15747</accession>
<proteinExistence type="inferred from homology"/>
<organism>
    <name type="scientific">Klebsiella pneumoniae</name>
    <dbReference type="NCBI Taxonomy" id="573"/>
    <lineage>
        <taxon>Bacteria</taxon>
        <taxon>Pseudomonadati</taxon>
        <taxon>Pseudomonadota</taxon>
        <taxon>Gammaproteobacteria</taxon>
        <taxon>Enterobacterales</taxon>
        <taxon>Enterobacteriaceae</taxon>
        <taxon>Klebsiella/Raoultella group</taxon>
        <taxon>Klebsiella</taxon>
        <taxon>Klebsiella pneumoniae complex</taxon>
    </lineage>
</organism>
<reference key="1">
    <citation type="journal article" date="1990" name="Mol. Gen. Genet.">
        <title>Five additional genes in the pulC-O operon of the Gram-negative bacterium Klebsiella oxytoca UNF5023 which are required for pullulanase secretion.</title>
        <authorList>
            <person name="Reyss I."/>
            <person name="Pugsley A.P."/>
        </authorList>
    </citation>
    <scope>NUCLEOTIDE SEQUENCE [GENOMIC DNA]</scope>
    <source>
        <strain>UNF 5023</strain>
    </source>
</reference>
<protein>
    <recommendedName>
        <fullName>Type II secretion system protein H</fullName>
        <shortName>T2SS minor pseudopilin H</shortName>
    </recommendedName>
    <alternativeName>
        <fullName>General secretion pathway protein H</fullName>
    </alternativeName>
    <alternativeName>
        <fullName>Pullulanase secretion protein PulH</fullName>
    </alternativeName>
</protein>
<dbReference type="EMBL" id="M32613">
    <property type="protein sequence ID" value="AAA25130.1"/>
    <property type="status" value="ALT_INIT"/>
    <property type="molecule type" value="Genomic_DNA"/>
</dbReference>
<dbReference type="SMR" id="P15747"/>
<dbReference type="TCDB" id="3.A.15.1.1">
    <property type="family name" value="the outer membrane protein secreting main terminal branch (mtb) family"/>
</dbReference>
<dbReference type="GO" id="GO:0005886">
    <property type="term" value="C:plasma membrane"/>
    <property type="evidence" value="ECO:0007669"/>
    <property type="project" value="UniProtKB-SubCell"/>
</dbReference>
<dbReference type="GO" id="GO:0015627">
    <property type="term" value="C:type II protein secretion system complex"/>
    <property type="evidence" value="ECO:0007669"/>
    <property type="project" value="InterPro"/>
</dbReference>
<dbReference type="GO" id="GO:0015628">
    <property type="term" value="P:protein secretion by the type II secretion system"/>
    <property type="evidence" value="ECO:0007669"/>
    <property type="project" value="InterPro"/>
</dbReference>
<dbReference type="Gene3D" id="3.55.40.10">
    <property type="entry name" value="minor pseudopilin epsh domain"/>
    <property type="match status" value="1"/>
</dbReference>
<dbReference type="InterPro" id="IPR012902">
    <property type="entry name" value="N_methyl_site"/>
</dbReference>
<dbReference type="InterPro" id="IPR045584">
    <property type="entry name" value="Pilin-like"/>
</dbReference>
<dbReference type="InterPro" id="IPR002416">
    <property type="entry name" value="T2SS_protein-GspH"/>
</dbReference>
<dbReference type="InterPro" id="IPR049875">
    <property type="entry name" value="TypeII_GspH"/>
</dbReference>
<dbReference type="NCBIfam" id="TIGR01708">
    <property type="entry name" value="typeII_sec_gspH"/>
    <property type="match status" value="1"/>
</dbReference>
<dbReference type="Pfam" id="PF07963">
    <property type="entry name" value="N_methyl"/>
    <property type="match status" value="1"/>
</dbReference>
<dbReference type="PRINTS" id="PR00885">
    <property type="entry name" value="BCTERIALGSPH"/>
</dbReference>
<dbReference type="SUPFAM" id="SSF54523">
    <property type="entry name" value="Pili subunits"/>
    <property type="match status" value="1"/>
</dbReference>
<dbReference type="PROSITE" id="PS00409">
    <property type="entry name" value="PROKAR_NTER_METHYL"/>
    <property type="match status" value="1"/>
</dbReference>